<accession>O83890</accession>
<feature type="chain" id="PRO_0000106455" description="TPR repeat-containing protein TP_0920">
    <location>
        <begin position="1"/>
        <end position="809"/>
    </location>
</feature>
<feature type="repeat" description="TPR 1">
    <location>
        <begin position="315"/>
        <end position="348"/>
    </location>
</feature>
<feature type="repeat" description="TPR 2">
    <location>
        <begin position="383"/>
        <end position="416"/>
    </location>
</feature>
<feature type="repeat" description="TPR 3">
    <location>
        <begin position="418"/>
        <end position="450"/>
    </location>
</feature>
<feature type="repeat" description="TPR 4">
    <location>
        <begin position="471"/>
        <end position="504"/>
    </location>
</feature>
<feature type="repeat" description="TPR 5">
    <location>
        <begin position="513"/>
        <end position="550"/>
    </location>
</feature>
<feature type="repeat" description="TPR 6">
    <location>
        <begin position="552"/>
        <end position="582"/>
    </location>
</feature>
<feature type="repeat" description="TPR 7">
    <location>
        <begin position="583"/>
        <end position="616"/>
    </location>
</feature>
<feature type="repeat" description="TPR 8">
    <location>
        <begin position="656"/>
        <end position="689"/>
    </location>
</feature>
<feature type="repeat" description="TPR 9">
    <location>
        <begin position="723"/>
        <end position="756"/>
    </location>
</feature>
<feature type="region of interest" description="Disordered" evidence="1">
    <location>
        <begin position="103"/>
        <end position="125"/>
    </location>
</feature>
<protein>
    <recommendedName>
        <fullName>TPR repeat-containing protein TP_0920</fullName>
    </recommendedName>
</protein>
<gene>
    <name type="ordered locus">TP_0920</name>
</gene>
<name>Y920_TREPA</name>
<sequence length="809" mass="90163">MGVGRARLYFQYFKAKFLKRRVTPPVDYEEIVSEFWRADFSSTEHARWHAEAGDGYETARGAHGLTLHLRRKFLYAWSANPVFRYKDCVLTARIRFLPGTHPPGEARALPNSEQPEVPASLDSTSRPACLPEAVAVDPSAMGEAVPERAGTCAAGLLFRYLNESTFYALLVSDGGWLRLDAVVNNTPLPLLGWTDTGASDEVRVLSLIAVGTSFTLCVDDQWIAQIEDDTIQAAGKVCFAAQNWGVHAHRSFELSAFSLESQPFMVETACLRANEPARIPASAHLRLAESLYAMGRAACARAEMKKLKAKCTFGLREYLLAGDIACAQHLYDEAEEAFNAALVQDPHCMRALLALGGALYQQNAYEKLAHLLATHRVVAERDAFLSNLCGHLALAQNRHEDAAAAYQRAFRLDPHQGLFALHAAQELSLLGEKEQAIQAYLHAARLFLAQESYADLERVVLALRRLDPERTEVRSIAGKLYYATGRHRQAHTQFDALCRAGSADATVWYLYGLLLREAQGTHEHDAPAAAACEQRARDAFQRACALAPDCALYHFKYAESLFLSEKDCDEPLARALALDPDNGWLHNLCAQKALREQNFDAAAQSLQRARALLPHELVVLENYIELQRQRGALACCVPLFEVETQRADAAVIAQRGQAFHLLANAFYADGCYEHAAPWYDKALREEPQNVQMLVHKAENSIKLHLLHEADALLVKALDIQLTAHVYTLIALVAAQLGDFPRAELTLQEACTLWPQCTEVRIELIHLYLTMQDRQQAATQWNILVQKEDSDRVRALHALIFEEKPPAPQE</sequence>
<reference key="1">
    <citation type="journal article" date="1998" name="Science">
        <title>Complete genome sequence of Treponema pallidum, the syphilis spirochete.</title>
        <authorList>
            <person name="Fraser C.M."/>
            <person name="Norris S.J."/>
            <person name="Weinstock G.M."/>
            <person name="White O."/>
            <person name="Sutton G.G."/>
            <person name="Dodson R.J."/>
            <person name="Gwinn M.L."/>
            <person name="Hickey E.K."/>
            <person name="Clayton R.A."/>
            <person name="Ketchum K.A."/>
            <person name="Sodergren E."/>
            <person name="Hardham J.M."/>
            <person name="McLeod M.P."/>
            <person name="Salzberg S.L."/>
            <person name="Peterson J.D."/>
            <person name="Khalak H.G."/>
            <person name="Richardson D.L."/>
            <person name="Howell J.K."/>
            <person name="Chidambaram M."/>
            <person name="Utterback T.R."/>
            <person name="McDonald L.A."/>
            <person name="Artiach P."/>
            <person name="Bowman C."/>
            <person name="Cotton M.D."/>
            <person name="Fujii C."/>
            <person name="Garland S.A."/>
            <person name="Hatch B."/>
            <person name="Horst K."/>
            <person name="Roberts K.M."/>
            <person name="Sandusky M."/>
            <person name="Weidman J.F."/>
            <person name="Smith H.O."/>
            <person name="Venter J.C."/>
        </authorList>
    </citation>
    <scope>NUCLEOTIDE SEQUENCE [LARGE SCALE GENOMIC DNA]</scope>
    <source>
        <strain>Nichols</strain>
    </source>
</reference>
<keyword id="KW-1185">Reference proteome</keyword>
<keyword id="KW-0677">Repeat</keyword>
<keyword id="KW-0802">TPR repeat</keyword>
<proteinExistence type="predicted"/>
<organism>
    <name type="scientific">Treponema pallidum (strain Nichols)</name>
    <dbReference type="NCBI Taxonomy" id="243276"/>
    <lineage>
        <taxon>Bacteria</taxon>
        <taxon>Pseudomonadati</taxon>
        <taxon>Spirochaetota</taxon>
        <taxon>Spirochaetia</taxon>
        <taxon>Spirochaetales</taxon>
        <taxon>Treponemataceae</taxon>
        <taxon>Treponema</taxon>
    </lineage>
</organism>
<dbReference type="EMBL" id="AE000520">
    <property type="protein sequence ID" value="AAC65878.1"/>
    <property type="molecule type" value="Genomic_DNA"/>
</dbReference>
<dbReference type="PIR" id="E71265">
    <property type="entry name" value="E71265"/>
</dbReference>
<dbReference type="SMR" id="O83890"/>
<dbReference type="IntAct" id="O83890">
    <property type="interactions" value="7"/>
</dbReference>
<dbReference type="STRING" id="243276.TP_0920"/>
<dbReference type="EnsemblBacteria" id="AAC65878">
    <property type="protein sequence ID" value="AAC65878"/>
    <property type="gene ID" value="TP_0920"/>
</dbReference>
<dbReference type="KEGG" id="tpa:TP_0920"/>
<dbReference type="KEGG" id="tpw:TPANIC_0920"/>
<dbReference type="eggNOG" id="COG0457">
    <property type="taxonomic scope" value="Bacteria"/>
</dbReference>
<dbReference type="HOGENOM" id="CLU_326228_0_0_12"/>
<dbReference type="Proteomes" id="UP000000811">
    <property type="component" value="Chromosome"/>
</dbReference>
<dbReference type="Gene3D" id="2.60.120.560">
    <property type="entry name" value="Exo-inulinase, domain 1"/>
    <property type="match status" value="1"/>
</dbReference>
<dbReference type="Gene3D" id="1.25.40.10">
    <property type="entry name" value="Tetratricopeptide repeat domain"/>
    <property type="match status" value="4"/>
</dbReference>
<dbReference type="InterPro" id="IPR011990">
    <property type="entry name" value="TPR-like_helical_dom_sf"/>
</dbReference>
<dbReference type="InterPro" id="IPR019734">
    <property type="entry name" value="TPR_rpt"/>
</dbReference>
<dbReference type="PANTHER" id="PTHR12558">
    <property type="entry name" value="CELL DIVISION CYCLE 16,23,27"/>
    <property type="match status" value="1"/>
</dbReference>
<dbReference type="PANTHER" id="PTHR12558:SF13">
    <property type="entry name" value="CELL DIVISION CYCLE PROTEIN 27 HOMOLOG"/>
    <property type="match status" value="1"/>
</dbReference>
<dbReference type="Pfam" id="PF13432">
    <property type="entry name" value="TPR_16"/>
    <property type="match status" value="2"/>
</dbReference>
<dbReference type="SMART" id="SM00028">
    <property type="entry name" value="TPR"/>
    <property type="match status" value="5"/>
</dbReference>
<dbReference type="SUPFAM" id="SSF48452">
    <property type="entry name" value="TPR-like"/>
    <property type="match status" value="3"/>
</dbReference>
<dbReference type="PROSITE" id="PS50005">
    <property type="entry name" value="TPR"/>
    <property type="match status" value="5"/>
</dbReference>
<dbReference type="PROSITE" id="PS50293">
    <property type="entry name" value="TPR_REGION"/>
    <property type="match status" value="3"/>
</dbReference>
<evidence type="ECO:0000256" key="1">
    <source>
        <dbReference type="SAM" id="MobiDB-lite"/>
    </source>
</evidence>